<reference key="1">
    <citation type="journal article" date="2002" name="J. Bacteriol.">
        <title>Whole-genome comparison of Mycobacterium tuberculosis clinical and laboratory strains.</title>
        <authorList>
            <person name="Fleischmann R.D."/>
            <person name="Alland D."/>
            <person name="Eisen J.A."/>
            <person name="Carpenter L."/>
            <person name="White O."/>
            <person name="Peterson J.D."/>
            <person name="DeBoy R.T."/>
            <person name="Dodson R.J."/>
            <person name="Gwinn M.L."/>
            <person name="Haft D.H."/>
            <person name="Hickey E.K."/>
            <person name="Kolonay J.F."/>
            <person name="Nelson W.C."/>
            <person name="Umayam L.A."/>
            <person name="Ermolaeva M.D."/>
            <person name="Salzberg S.L."/>
            <person name="Delcher A."/>
            <person name="Utterback T.R."/>
            <person name="Weidman J.F."/>
            <person name="Khouri H.M."/>
            <person name="Gill J."/>
            <person name="Mikula A."/>
            <person name="Bishai W."/>
            <person name="Jacobs W.R. Jr."/>
            <person name="Venter J.C."/>
            <person name="Fraser C.M."/>
        </authorList>
    </citation>
    <scope>NUCLEOTIDE SEQUENCE [LARGE SCALE GENOMIC DNA]</scope>
    <source>
        <strain>CDC 1551 / Oshkosh</strain>
    </source>
</reference>
<protein>
    <recommendedName>
        <fullName>Putative serine esterase MT1883</fullName>
        <ecNumber>3.1.1.-</ecNumber>
    </recommendedName>
</protein>
<accession>P9WIQ8</accession>
<accession>L0T9E2</accession>
<accession>P0A5F5</accession>
<accession>Q50598</accession>
<organism>
    <name type="scientific">Mycobacterium tuberculosis (strain CDC 1551 / Oshkosh)</name>
    <dbReference type="NCBI Taxonomy" id="83331"/>
    <lineage>
        <taxon>Bacteria</taxon>
        <taxon>Bacillati</taxon>
        <taxon>Actinomycetota</taxon>
        <taxon>Actinomycetes</taxon>
        <taxon>Mycobacteriales</taxon>
        <taxon>Mycobacteriaceae</taxon>
        <taxon>Mycobacterium</taxon>
        <taxon>Mycobacterium tuberculosis complex</taxon>
    </lineage>
</organism>
<dbReference type="EC" id="3.1.1.-"/>
<dbReference type="EMBL" id="AE000516">
    <property type="status" value="NOT_ANNOTATED_CDS"/>
    <property type="molecule type" value="Genomic_DNA"/>
</dbReference>
<dbReference type="PIR" id="D70722">
    <property type="entry name" value="D70722"/>
</dbReference>
<dbReference type="SMR" id="P9WIQ8"/>
<dbReference type="ESTHER" id="myctu-y1835">
    <property type="family name" value="Cocaine_esterase"/>
</dbReference>
<dbReference type="Proteomes" id="UP000001020">
    <property type="component" value="Chromosome"/>
</dbReference>
<dbReference type="GO" id="GO:0052689">
    <property type="term" value="F:carboxylic ester hydrolase activity"/>
    <property type="evidence" value="ECO:0007669"/>
    <property type="project" value="UniProtKB-KW"/>
</dbReference>
<dbReference type="GO" id="GO:0008239">
    <property type="term" value="F:dipeptidyl-peptidase activity"/>
    <property type="evidence" value="ECO:0007669"/>
    <property type="project" value="InterPro"/>
</dbReference>
<dbReference type="Gene3D" id="3.40.50.1820">
    <property type="entry name" value="alpha/beta hydrolase"/>
    <property type="match status" value="2"/>
</dbReference>
<dbReference type="Gene3D" id="2.60.120.260">
    <property type="entry name" value="Galactose-binding domain-like"/>
    <property type="match status" value="1"/>
</dbReference>
<dbReference type="InterPro" id="IPR029058">
    <property type="entry name" value="AB_hydrolase_fold"/>
</dbReference>
<dbReference type="InterPro" id="IPR005674">
    <property type="entry name" value="CocE/Ser_esterase"/>
</dbReference>
<dbReference type="InterPro" id="IPR008979">
    <property type="entry name" value="Galactose-bd-like_sf"/>
</dbReference>
<dbReference type="InterPro" id="IPR000383">
    <property type="entry name" value="Xaa-Pro-like_dom"/>
</dbReference>
<dbReference type="InterPro" id="IPR013736">
    <property type="entry name" value="Xaa-Pro_dipept_C"/>
</dbReference>
<dbReference type="InterPro" id="IPR050585">
    <property type="entry name" value="Xaa-Pro_dipeptidyl-ppase/CocE"/>
</dbReference>
<dbReference type="NCBIfam" id="TIGR00976">
    <property type="entry name" value="CocE_NonD"/>
    <property type="match status" value="1"/>
</dbReference>
<dbReference type="PANTHER" id="PTHR43056:SF10">
    <property type="entry name" value="COCE_NOND FAMILY, PUTATIVE (AFU_ORTHOLOGUE AFUA_7G00600)-RELATED"/>
    <property type="match status" value="1"/>
</dbReference>
<dbReference type="PANTHER" id="PTHR43056">
    <property type="entry name" value="PEPTIDASE S9 PROLYL OLIGOPEPTIDASE"/>
    <property type="match status" value="1"/>
</dbReference>
<dbReference type="Pfam" id="PF02129">
    <property type="entry name" value="Peptidase_S15"/>
    <property type="match status" value="1"/>
</dbReference>
<dbReference type="Pfam" id="PF08530">
    <property type="entry name" value="PepX_C"/>
    <property type="match status" value="1"/>
</dbReference>
<dbReference type="SMART" id="SM00939">
    <property type="entry name" value="PepX_C"/>
    <property type="match status" value="1"/>
</dbReference>
<dbReference type="SUPFAM" id="SSF53474">
    <property type="entry name" value="alpha/beta-Hydrolases"/>
    <property type="match status" value="1"/>
</dbReference>
<dbReference type="SUPFAM" id="SSF49785">
    <property type="entry name" value="Galactose-binding domain-like"/>
    <property type="match status" value="1"/>
</dbReference>
<gene>
    <name type="ordered locus">MT1883</name>
</gene>
<comment type="similarity">
    <text evidence="2">Belongs to the CocE/NonD hydrolase family.</text>
</comment>
<comment type="sequence caution" evidence="2">
    <conflict type="frameshift">
        <sequence resource="EMBL" id="AE000516"/>
    </conflict>
</comment>
<sequence>MTRRGGSDAAWYSAPDQRSAYPRYRGMRYSSCYVTMRDGVRIAIDLYLPAGLTSAARLPAILHQTRYYRSLQLRWPLRMLLGGKPLQHIAADKRRRRRFVASGYAWVDVDVRGSGASFGARVCEWSSDEIRDGAEIVDWIVRQPWCNGTVAALGNSYDGTSAELLLVNQHPAVRVIAPCFSLFDVYTDIAFPGGIHAAWFTDTWGRYNEALDRNALHEVVGWWAKLPVTGMQPVQEDRDRSLRDGAIAAHRGNYDVHQIAGSLTFRDDVSASDPYRGQPDARLEPIGTPIESGSINLISPHNYWRDVQASGAAIYSYSGWFDGGYAHAAIKRFLTVSTPGSHLILGPWNHTGGWRVDPLRGLSRPDFDHDGELLRFIDHHVKGADTGIGSEPPVHYFTMVENRWKSADTWPPPATTQSYYLSADRQLRPDAPDCDSGADEYVVDQTAGTGERSRWRSQVGIGGHVCYPDRKAQDAKLLTYTSAPLDHPLEVTGHVVVTLFITSTSSDGTFFVYLEDVDPRGRVAYITEGQLRAIHRRLSDGPPPYRQVVPYRTFASGDAWPLVPGEIARLTFDLLPTSYLFQPGHRIRIAIAGADASHFAILPGCAPTVRVYRSRMHASRIDLPVIQP</sequence>
<name>Y1835_MYCTO</name>
<proteinExistence type="inferred from homology"/>
<feature type="chain" id="PRO_0000427962" description="Putative serine esterase MT1883">
    <location>
        <begin position="1"/>
        <end position="628"/>
    </location>
</feature>
<feature type="active site" description="Acyl-ester intermediate" evidence="1">
    <location>
        <position position="156"/>
    </location>
</feature>
<feature type="active site" description="Charge relay system" evidence="1">
    <location>
        <position position="322"/>
    </location>
</feature>
<feature type="active site" description="Charge relay system" evidence="1">
    <location>
        <position position="350"/>
    </location>
</feature>
<evidence type="ECO:0000250" key="1"/>
<evidence type="ECO:0000305" key="2"/>
<keyword id="KW-0378">Hydrolase</keyword>
<keyword id="KW-1185">Reference proteome</keyword>
<keyword id="KW-0719">Serine esterase</keyword>